<organism>
    <name type="scientific">Danio rerio</name>
    <name type="common">Zebrafish</name>
    <name type="synonym">Brachydanio rerio</name>
    <dbReference type="NCBI Taxonomy" id="7955"/>
    <lineage>
        <taxon>Eukaryota</taxon>
        <taxon>Metazoa</taxon>
        <taxon>Chordata</taxon>
        <taxon>Craniata</taxon>
        <taxon>Vertebrata</taxon>
        <taxon>Euteleostomi</taxon>
        <taxon>Actinopterygii</taxon>
        <taxon>Neopterygii</taxon>
        <taxon>Teleostei</taxon>
        <taxon>Ostariophysi</taxon>
        <taxon>Cypriniformes</taxon>
        <taxon>Danionidae</taxon>
        <taxon>Danioninae</taxon>
        <taxon>Danio</taxon>
    </lineage>
</organism>
<proteinExistence type="evidence at transcript level"/>
<feature type="chain" id="PRO_0000357454" description="Transcriptional adapter 3">
    <location>
        <begin position="1"/>
        <end position="429"/>
    </location>
</feature>
<feature type="region of interest" description="Disordered" evidence="3">
    <location>
        <begin position="86"/>
        <end position="132"/>
    </location>
</feature>
<feature type="region of interest" description="Disordered" evidence="3">
    <location>
        <begin position="208"/>
        <end position="257"/>
    </location>
</feature>
<feature type="region of interest" description="Disordered" evidence="3">
    <location>
        <begin position="274"/>
        <end position="308"/>
    </location>
</feature>
<feature type="coiled-coil region" evidence="2">
    <location>
        <begin position="41"/>
        <end position="70"/>
    </location>
</feature>
<feature type="coiled-coil region" evidence="2">
    <location>
        <begin position="364"/>
        <end position="404"/>
    </location>
</feature>
<feature type="compositionally biased region" description="Basic and acidic residues" evidence="3">
    <location>
        <begin position="208"/>
        <end position="221"/>
    </location>
</feature>
<feature type="compositionally biased region" description="Basic and acidic residues" evidence="3">
    <location>
        <begin position="230"/>
        <end position="249"/>
    </location>
</feature>
<gene>
    <name type="primary">tada3</name>
    <name type="synonym">ada3</name>
    <name type="synonym">tada3l</name>
</gene>
<comment type="function">
    <text evidence="1">Functions as a component of the PCAF complex. The PCAF complex is capable of efficiently acetylating histones in a nucleosomal context (By similarity).</text>
</comment>
<comment type="subcellular location">
    <subcellularLocation>
        <location evidence="1">Nucleus</location>
    </subcellularLocation>
</comment>
<comment type="similarity">
    <text evidence="4">Belongs to the NGG1 family.</text>
</comment>
<reference key="1">
    <citation type="submission" date="2003-07" db="EMBL/GenBank/DDBJ databases">
        <authorList>
            <consortium name="NIH - Zebrafish Gene Collection (ZGC) project"/>
        </authorList>
    </citation>
    <scope>NUCLEOTIDE SEQUENCE [LARGE SCALE MRNA]</scope>
</reference>
<dbReference type="EMBL" id="BC055157">
    <property type="protein sequence ID" value="AAH55157.1"/>
    <property type="molecule type" value="mRNA"/>
</dbReference>
<dbReference type="RefSeq" id="NP_956220.1">
    <property type="nucleotide sequence ID" value="NM_199926.1"/>
</dbReference>
<dbReference type="SMR" id="Q7SY21"/>
<dbReference type="FunCoup" id="Q7SY21">
    <property type="interactions" value="1806"/>
</dbReference>
<dbReference type="STRING" id="7955.ENSDARP00000075497"/>
<dbReference type="PaxDb" id="7955-ENSDARP00000075497"/>
<dbReference type="GeneID" id="334785"/>
<dbReference type="KEGG" id="dre:334785"/>
<dbReference type="AGR" id="ZFIN:ZDB-GENE-030131-6725"/>
<dbReference type="CTD" id="334785"/>
<dbReference type="ZFIN" id="ZDB-GENE-030131-6725">
    <property type="gene designation" value="tada3l"/>
</dbReference>
<dbReference type="eggNOG" id="KOG4191">
    <property type="taxonomic scope" value="Eukaryota"/>
</dbReference>
<dbReference type="InParanoid" id="Q7SY21"/>
<dbReference type="OrthoDB" id="1232at2759"/>
<dbReference type="PhylomeDB" id="Q7SY21"/>
<dbReference type="Reactome" id="R-DRE-5689880">
    <property type="pathway name" value="Ub-specific processing proteases"/>
</dbReference>
<dbReference type="PRO" id="PR:Q7SY21"/>
<dbReference type="Proteomes" id="UP000000437">
    <property type="component" value="Alternate scaffold 11"/>
</dbReference>
<dbReference type="Proteomes" id="UP000000437">
    <property type="component" value="Chromosome 11"/>
</dbReference>
<dbReference type="GO" id="GO:0005634">
    <property type="term" value="C:nucleus"/>
    <property type="evidence" value="ECO:0007669"/>
    <property type="project" value="UniProtKB-SubCell"/>
</dbReference>
<dbReference type="GO" id="GO:0000124">
    <property type="term" value="C:SAGA complex"/>
    <property type="evidence" value="ECO:0000318"/>
    <property type="project" value="GO_Central"/>
</dbReference>
<dbReference type="GO" id="GO:0003713">
    <property type="term" value="F:transcription coactivator activity"/>
    <property type="evidence" value="ECO:0000318"/>
    <property type="project" value="GO_Central"/>
</dbReference>
<dbReference type="GO" id="GO:0006357">
    <property type="term" value="P:regulation of transcription by RNA polymerase II"/>
    <property type="evidence" value="ECO:0000318"/>
    <property type="project" value="GO_Central"/>
</dbReference>
<dbReference type="InterPro" id="IPR019340">
    <property type="entry name" value="Histone_AcTrfase_su3"/>
</dbReference>
<dbReference type="PANTHER" id="PTHR13556:SF2">
    <property type="entry name" value="TRANSCRIPTIONAL ADAPTER 3"/>
    <property type="match status" value="1"/>
</dbReference>
<dbReference type="PANTHER" id="PTHR13556">
    <property type="entry name" value="TRANSCRIPTIONAL ADAPTER 3-RELATED"/>
    <property type="match status" value="1"/>
</dbReference>
<dbReference type="Pfam" id="PF10198">
    <property type="entry name" value="Ada3"/>
    <property type="match status" value="1"/>
</dbReference>
<accession>Q7SY21</accession>
<sequence length="429" mass="48908">MSELKDCPPLKYYDFKPVDHVKVCPRYTAVLSRSEDDGIGIEELDTLQLELETLLSSASRRLRALEEQRQILTDWQDKKGDKRFLKLEKDPDLAASSRHSKPKKQKLDVKGSHGPGPGPGRPKSKNIQTKVQDFEFEVDPQDIPRNPKNDAPNRFWASVEPYCADITNEEIRVLEELLKAPDDEAEYYKIPTLGKHYSQRWAQEDLLEERREGARANDKKKSMMGPLSELDAKDVDALLKKSESQHEPPEDGCPFGPLSQRLLQALVEENIISPMEDSPIPDIPGKDDGAGTSPRSQGKAFSVPHTRSLEARIREELVSQGLLDSDERQGVGGESEDEVLAELQKRQAELKALTAHNRSRKLELLKLAREEMRKQELRQRVRVADNEVMEAFRRIMAARQKKRTPTKKEKDQAWKALKERESILKLLDG</sequence>
<name>TADA3_DANRE</name>
<keyword id="KW-0175">Coiled coil</keyword>
<keyword id="KW-0539">Nucleus</keyword>
<keyword id="KW-1185">Reference proteome</keyword>
<keyword id="KW-0804">Transcription</keyword>
<keyword id="KW-0805">Transcription regulation</keyword>
<protein>
    <recommendedName>
        <fullName>Transcriptional adapter 3</fullName>
    </recommendedName>
    <alternativeName>
        <fullName>ADA3 homolog</fullName>
    </alternativeName>
    <alternativeName>
        <fullName>Transcriptional adapter 3-like</fullName>
        <shortName>ADA3-like protein</shortName>
    </alternativeName>
</protein>
<evidence type="ECO:0000250" key="1"/>
<evidence type="ECO:0000255" key="2"/>
<evidence type="ECO:0000256" key="3">
    <source>
        <dbReference type="SAM" id="MobiDB-lite"/>
    </source>
</evidence>
<evidence type="ECO:0000305" key="4"/>